<comment type="function">
    <text evidence="1 2 8 9">Member of the two-component regulatory system WalK/WalR that regulates genes involved in cell wall metabolism (By similarity). Functions as a sensor protein kinase which is autophosphorylated at a histidine residue and transfers its phosphate group to WalR (By similarity). In turn, WalR binds to the upstream promoter regions of target genes to positively and negatively regulate their expression (By similarity). Required to maintain expression of WalRK regulon genes in exponentially growing cells, including peptidoglycan hydrolase pcsB (PubMed:23013245). Phosphorylates WalR and also capable of dephosphorylation of WalR (PubMed:23013245). WalK phosphatase activity is probably involved in preventing cross-talk from PnpS and other non-cognate sensor kinases during exponential growth (PubMed:23013245). May be considered a potential virulence factor (PubMed:20190050).</text>
</comment>
<comment type="catalytic activity">
    <reaction evidence="9">
        <text>ATP + protein L-histidine = ADP + protein N-phospho-L-histidine.</text>
        <dbReference type="EC" id="2.7.13.3"/>
    </reaction>
</comment>
<comment type="subunit">
    <text evidence="1">May form homodimers. May interact with serine/threonine-protein kinase StkP; the interaction may play a role in regulating Walk signal transduction.</text>
</comment>
<comment type="subcellular location">
    <subcellularLocation>
        <location evidence="3">Membrane</location>
        <topology evidence="3">Single-pass type III membrane protein</topology>
    </subcellularLocation>
</comment>
<comment type="domain">
    <text evidence="1">Transmembrane domain is involved in signal sensing or transduction.</text>
</comment>
<comment type="domain">
    <text evidence="1">PAS domain is involved in phosphatase activity.</text>
</comment>
<comment type="PTM">
    <text evidence="1">Autophosphorylated.</text>
</comment>
<comment type="disruption phenotype">
    <text evidence="8 9">Similar growth rate, but overall lower growth yield (PubMed:20190050). Attenuates virulence in an ICR strain male mouse pneumonia model (PubMed:20190050). Decreases relative transcript amounts of members of the WalRK regulon, including peptidoglycan hydrolase gene pcsB (PubMed:23013245). In a response regulator pnpR deletion mutant background, significant phosphorylation of WalR is detectable, but this is abrogated by a further deletion of the sensor kinase pnpS (PubMed:23013245).</text>
</comment>
<evidence type="ECO:0000250" key="1">
    <source>
        <dbReference type="UniProtKB" id="Q8DPL8"/>
    </source>
</evidence>
<evidence type="ECO:0000250" key="2">
    <source>
        <dbReference type="UniProtKB" id="Q9RDT3"/>
    </source>
</evidence>
<evidence type="ECO:0000255" key="3"/>
<evidence type="ECO:0000255" key="4">
    <source>
        <dbReference type="PROSITE-ProRule" id="PRU00102"/>
    </source>
</evidence>
<evidence type="ECO:0000255" key="5">
    <source>
        <dbReference type="PROSITE-ProRule" id="PRU00107"/>
    </source>
</evidence>
<evidence type="ECO:0000255" key="6">
    <source>
        <dbReference type="PROSITE-ProRule" id="PRU00140"/>
    </source>
</evidence>
<evidence type="ECO:0000255" key="7">
    <source>
        <dbReference type="PROSITE-ProRule" id="PRU00141"/>
    </source>
</evidence>
<evidence type="ECO:0000269" key="8">
    <source>
    </source>
</evidence>
<evidence type="ECO:0000269" key="9">
    <source>
    </source>
</evidence>
<evidence type="ECO:0000303" key="10">
    <source>
    </source>
</evidence>
<evidence type="ECO:0000305" key="11"/>
<evidence type="ECO:0000312" key="12">
    <source>
        <dbReference type="Proteomes" id="UP000001452"/>
    </source>
</evidence>
<feature type="chain" id="PRO_0000458749" description="Sensor histidine protein kinase/phosphatase WalK">
    <location>
        <begin position="1"/>
        <end position="449"/>
    </location>
</feature>
<feature type="topological domain" description="Extracellular" evidence="11">
    <location>
        <begin position="1"/>
        <end position="13"/>
    </location>
</feature>
<feature type="transmembrane region" description="Helical" evidence="3">
    <location>
        <begin position="14"/>
        <end position="34"/>
    </location>
</feature>
<feature type="topological domain" description="Cytoplasmic" evidence="11">
    <location>
        <begin position="35"/>
        <end position="449"/>
    </location>
</feature>
<feature type="domain" description="HAMP" evidence="4">
    <location>
        <begin position="35"/>
        <end position="87"/>
    </location>
</feature>
<feature type="domain" description="PAS" evidence="6">
    <location>
        <begin position="92"/>
        <end position="158"/>
    </location>
</feature>
<feature type="domain" description="PAC" evidence="7">
    <location>
        <begin position="157"/>
        <end position="211"/>
    </location>
</feature>
<feature type="domain" description="Histidine kinase" evidence="5">
    <location>
        <begin position="215"/>
        <end position="435"/>
    </location>
</feature>
<feature type="modified residue" description="Phosphohistidine" evidence="5 9">
    <location>
        <position position="218"/>
    </location>
</feature>
<feature type="mutagenesis site" description="Attenuates virulence in an ICR strain male mouse pneumonia model. Decreases relative transcript amounts of members of the WalRK regulon, including peptidoglycan hydrolase gene pcsB. Increase in cellular amount of phosphorylated WalR." evidence="8 9">
    <location>
        <begin position="104"/>
        <end position="198"/>
    </location>
</feature>
<feature type="mutagenesis site" description="Similar growth rate, but overall lower growth yield. Attenuates virulence in an ICR strain male mouse pneumonia model." evidence="8">
    <original>H</original>
    <variation>A</variation>
    <location>
        <position position="218"/>
    </location>
</feature>
<feature type="mutagenesis site" description="Similar growth rate, but overall lower growth yield. Large (sevenfold) increase in WalRK regulon expression. Increase in cellular amount of phosphorylated WalR." evidence="9">
    <original>T</original>
    <variation>A</variation>
    <location>
        <position position="222"/>
    </location>
</feature>
<feature type="mutagenesis site" description="Attenuates virulence in an ICR strain male mouse pneumonia model." evidence="8">
    <original>T</original>
    <variation>R</variation>
    <location>
        <position position="222"/>
    </location>
</feature>
<name>WALK_STRP2</name>
<accession>A0A0H2ZNH9</accession>
<organism evidence="12">
    <name type="scientific">Streptococcus pneumoniae serotype 2 (strain D39 / NCTC 7466)</name>
    <dbReference type="NCBI Taxonomy" id="373153"/>
    <lineage>
        <taxon>Bacteria</taxon>
        <taxon>Bacillati</taxon>
        <taxon>Bacillota</taxon>
        <taxon>Bacilli</taxon>
        <taxon>Lactobacillales</taxon>
        <taxon>Streptococcaceae</taxon>
        <taxon>Streptococcus</taxon>
    </lineage>
</organism>
<gene>
    <name evidence="1" type="primary">walK</name>
    <name evidence="10" type="ordered locus">SPD_1084</name>
</gene>
<proteinExistence type="evidence at protein level"/>
<reference evidence="12" key="1">
    <citation type="journal article" date="2007" name="J. Bacteriol.">
        <title>Genome sequence of Avery's virulent serotype 2 strain D39 of Streptococcus pneumoniae and comparison with that of unencapsulated laboratory strain R6.</title>
        <authorList>
            <person name="Lanie J.A."/>
            <person name="Ng W.-L."/>
            <person name="Kazmierczak K.M."/>
            <person name="Andrzejewski T.M."/>
            <person name="Davidsen T.M."/>
            <person name="Wayne K.J."/>
            <person name="Tettelin H."/>
            <person name="Glass J.I."/>
            <person name="Winkler M.E."/>
        </authorList>
    </citation>
    <scope>NUCLEOTIDE SEQUENCE [LARGE SCALE GENOMIC DNA]</scope>
    <source>
        <strain evidence="12">D39 / NCTC 7466</strain>
    </source>
</reference>
<reference evidence="11" key="2">
    <citation type="journal article" date="2010" name="J. Bacteriol.">
        <title>Kinetic characterization of the WalRKSpn (VicRK) two-component system of Streptococcus pneumoniae: dependence of WalKSpn (VicK) phosphatase activity on its PAS domain.</title>
        <authorList>
            <person name="Gutu A.D."/>
            <person name="Wayne K.J."/>
            <person name="Sham L.T."/>
            <person name="Winkler M.E."/>
        </authorList>
    </citation>
    <scope>FUNCTION</scope>
    <scope>DISRUPTION PHENOTYPE</scope>
    <scope>MUTAGENESIS OF HIS-218; 104-THR--ASP-198 AND THR-222</scope>
</reference>
<reference evidence="11" key="3">
    <citation type="journal article" date="2012" name="Mol. Microbiol.">
        <title>Involvement of WalK (VicK) phosphatase activity in setting WalR (VicR) response regulator phosphorylation level and limiting cross-talk in Streptococcus pneumoniae D39 cells.</title>
        <authorList>
            <person name="Wayne K.J."/>
            <person name="Li S."/>
            <person name="Kazmierczak K.M."/>
            <person name="Tsui H.C."/>
            <person name="Winkler M.E."/>
        </authorList>
    </citation>
    <scope>FUNCTION</scope>
    <scope>CATALYTIC ACTIVITY</scope>
    <scope>PHOSPHORYLATION AT HIS-218</scope>
    <scope>DISRUPTION PHENOTYPE</scope>
    <scope>MUTAGENESIS OF 104-THR--ASP-198 AND THR-222</scope>
</reference>
<keyword id="KW-0378">Hydrolase</keyword>
<keyword id="KW-0418">Kinase</keyword>
<keyword id="KW-0472">Membrane</keyword>
<keyword id="KW-0597">Phosphoprotein</keyword>
<keyword id="KW-1185">Reference proteome</keyword>
<keyword id="KW-0808">Transferase</keyword>
<keyword id="KW-0812">Transmembrane</keyword>
<keyword id="KW-1133">Transmembrane helix</keyword>
<keyword id="KW-0902">Two-component regulatory system</keyword>
<keyword id="KW-0843">Virulence</keyword>
<dbReference type="EC" id="2.7.13.3" evidence="9"/>
<dbReference type="EC" id="3.9.1.-" evidence="1"/>
<dbReference type="EMBL" id="CP000410">
    <property type="protein sequence ID" value="ABJ54218.1"/>
    <property type="molecule type" value="Genomic_DNA"/>
</dbReference>
<dbReference type="SMR" id="A0A0H2ZNH9"/>
<dbReference type="iPTMnet" id="A0A0H2ZNH9"/>
<dbReference type="PaxDb" id="373153-SPD_1084"/>
<dbReference type="KEGG" id="spd:SPD_1084"/>
<dbReference type="eggNOG" id="COG5002">
    <property type="taxonomic scope" value="Bacteria"/>
</dbReference>
<dbReference type="HOGENOM" id="CLU_000445_89_2_9"/>
<dbReference type="BioCyc" id="SPNE373153:G1G6V-1175-MONOMER"/>
<dbReference type="Proteomes" id="UP000001452">
    <property type="component" value="Chromosome"/>
</dbReference>
<dbReference type="GO" id="GO:0005886">
    <property type="term" value="C:plasma membrane"/>
    <property type="evidence" value="ECO:0007669"/>
    <property type="project" value="TreeGrafter"/>
</dbReference>
<dbReference type="GO" id="GO:0004721">
    <property type="term" value="F:phosphoprotein phosphatase activity"/>
    <property type="evidence" value="ECO:0000315"/>
    <property type="project" value="UniProtKB"/>
</dbReference>
<dbReference type="GO" id="GO:0000155">
    <property type="term" value="F:phosphorelay sensor kinase activity"/>
    <property type="evidence" value="ECO:0007669"/>
    <property type="project" value="InterPro"/>
</dbReference>
<dbReference type="GO" id="GO:0004673">
    <property type="term" value="F:protein histidine kinase activity"/>
    <property type="evidence" value="ECO:0000315"/>
    <property type="project" value="UniProtKB"/>
</dbReference>
<dbReference type="GO" id="GO:0016036">
    <property type="term" value="P:cellular response to phosphate starvation"/>
    <property type="evidence" value="ECO:0007669"/>
    <property type="project" value="TreeGrafter"/>
</dbReference>
<dbReference type="GO" id="GO:0006355">
    <property type="term" value="P:regulation of DNA-templated transcription"/>
    <property type="evidence" value="ECO:0000315"/>
    <property type="project" value="UniProtKB"/>
</dbReference>
<dbReference type="GO" id="GO:0007165">
    <property type="term" value="P:signal transduction"/>
    <property type="evidence" value="ECO:0000315"/>
    <property type="project" value="UniProtKB"/>
</dbReference>
<dbReference type="CDD" id="cd00075">
    <property type="entry name" value="HATPase"/>
    <property type="match status" value="1"/>
</dbReference>
<dbReference type="CDD" id="cd00082">
    <property type="entry name" value="HisKA"/>
    <property type="match status" value="1"/>
</dbReference>
<dbReference type="CDD" id="cd00130">
    <property type="entry name" value="PAS"/>
    <property type="match status" value="1"/>
</dbReference>
<dbReference type="FunFam" id="3.30.565.10:FF:000006">
    <property type="entry name" value="Sensor histidine kinase WalK"/>
    <property type="match status" value="1"/>
</dbReference>
<dbReference type="FunFam" id="1.10.8.500:FF:000005">
    <property type="entry name" value="Sensor histidine kinase YycG"/>
    <property type="match status" value="1"/>
</dbReference>
<dbReference type="FunFam" id="1.10.287.130:FF:000001">
    <property type="entry name" value="Two-component sensor histidine kinase"/>
    <property type="match status" value="1"/>
</dbReference>
<dbReference type="Gene3D" id="1.10.287.130">
    <property type="match status" value="1"/>
</dbReference>
<dbReference type="Gene3D" id="1.10.8.500">
    <property type="entry name" value="HAMP domain in histidine kinase"/>
    <property type="match status" value="1"/>
</dbReference>
<dbReference type="Gene3D" id="3.30.565.10">
    <property type="entry name" value="Histidine kinase-like ATPase, C-terminal domain"/>
    <property type="match status" value="1"/>
</dbReference>
<dbReference type="Gene3D" id="3.30.450.20">
    <property type="entry name" value="PAS domain"/>
    <property type="match status" value="1"/>
</dbReference>
<dbReference type="InterPro" id="IPR050351">
    <property type="entry name" value="2-comp_sensor_kinase"/>
</dbReference>
<dbReference type="InterPro" id="IPR003660">
    <property type="entry name" value="HAMP_dom"/>
</dbReference>
<dbReference type="InterPro" id="IPR036890">
    <property type="entry name" value="HATPase_C_sf"/>
</dbReference>
<dbReference type="InterPro" id="IPR005467">
    <property type="entry name" value="His_kinase_dom"/>
</dbReference>
<dbReference type="InterPro" id="IPR003661">
    <property type="entry name" value="HisK_dim/P_dom"/>
</dbReference>
<dbReference type="InterPro" id="IPR036097">
    <property type="entry name" value="HisK_dim/P_sf"/>
</dbReference>
<dbReference type="InterPro" id="IPR000014">
    <property type="entry name" value="PAS"/>
</dbReference>
<dbReference type="InterPro" id="IPR000700">
    <property type="entry name" value="PAS-assoc_C"/>
</dbReference>
<dbReference type="InterPro" id="IPR035965">
    <property type="entry name" value="PAS-like_dom_sf"/>
</dbReference>
<dbReference type="InterPro" id="IPR013767">
    <property type="entry name" value="PAS_fold"/>
</dbReference>
<dbReference type="InterPro" id="IPR004358">
    <property type="entry name" value="Sig_transdc_His_kin-like_C"/>
</dbReference>
<dbReference type="InterPro" id="IPR054693">
    <property type="entry name" value="WalK_HAMP"/>
</dbReference>
<dbReference type="NCBIfam" id="NF033093">
    <property type="entry name" value="HK_VicK"/>
    <property type="match status" value="1"/>
</dbReference>
<dbReference type="NCBIfam" id="TIGR00229">
    <property type="entry name" value="sensory_box"/>
    <property type="match status" value="1"/>
</dbReference>
<dbReference type="PANTHER" id="PTHR45453">
    <property type="entry name" value="PHOSPHATE REGULON SENSOR PROTEIN PHOR"/>
    <property type="match status" value="1"/>
</dbReference>
<dbReference type="PANTHER" id="PTHR45453:SF1">
    <property type="entry name" value="PHOSPHATE REGULON SENSOR PROTEIN PHOR"/>
    <property type="match status" value="1"/>
</dbReference>
<dbReference type="Pfam" id="PF22610">
    <property type="entry name" value="CovS-like_HAMP"/>
    <property type="match status" value="1"/>
</dbReference>
<dbReference type="Pfam" id="PF02518">
    <property type="entry name" value="HATPase_c"/>
    <property type="match status" value="1"/>
</dbReference>
<dbReference type="Pfam" id="PF00512">
    <property type="entry name" value="HisKA"/>
    <property type="match status" value="1"/>
</dbReference>
<dbReference type="Pfam" id="PF00989">
    <property type="entry name" value="PAS"/>
    <property type="match status" value="1"/>
</dbReference>
<dbReference type="PRINTS" id="PR00344">
    <property type="entry name" value="BCTRLSENSOR"/>
</dbReference>
<dbReference type="SMART" id="SM00387">
    <property type="entry name" value="HATPase_c"/>
    <property type="match status" value="1"/>
</dbReference>
<dbReference type="SMART" id="SM00388">
    <property type="entry name" value="HisKA"/>
    <property type="match status" value="1"/>
</dbReference>
<dbReference type="SMART" id="SM00091">
    <property type="entry name" value="PAS"/>
    <property type="match status" value="1"/>
</dbReference>
<dbReference type="SUPFAM" id="SSF55874">
    <property type="entry name" value="ATPase domain of HSP90 chaperone/DNA topoisomerase II/histidine kinase"/>
    <property type="match status" value="1"/>
</dbReference>
<dbReference type="SUPFAM" id="SSF47384">
    <property type="entry name" value="Homodimeric domain of signal transducing histidine kinase"/>
    <property type="match status" value="1"/>
</dbReference>
<dbReference type="SUPFAM" id="SSF55785">
    <property type="entry name" value="PYP-like sensor domain (PAS domain)"/>
    <property type="match status" value="1"/>
</dbReference>
<dbReference type="PROSITE" id="PS50885">
    <property type="entry name" value="HAMP"/>
    <property type="match status" value="1"/>
</dbReference>
<dbReference type="PROSITE" id="PS50109">
    <property type="entry name" value="HIS_KIN"/>
    <property type="match status" value="1"/>
</dbReference>
<dbReference type="PROSITE" id="PS50113">
    <property type="entry name" value="PAC"/>
    <property type="match status" value="1"/>
</dbReference>
<dbReference type="PROSITE" id="PS50112">
    <property type="entry name" value="PAS"/>
    <property type="match status" value="1"/>
</dbReference>
<protein>
    <recommendedName>
        <fullName evidence="1">Sensor histidine protein kinase/phosphatase WalK</fullName>
        <ecNumber evidence="9">2.7.13.3</ecNumber>
        <ecNumber evidence="1">3.9.1.-</ecNumber>
    </recommendedName>
</protein>
<sequence length="449" mass="51712">MLDLLKQTIFTRDFIFILILLGFILVVTLLLLENRRDNIQLKQINQKVKDLIAGDYSKVLDMQGGSEITNITNNLNDLSEVIRLTQENLEQESKRLNSILFYMTDGVLATNRRGQIIMINDTAKKQLGLVKEDVLNRSILELLKIEENYELRDLITQSPELLLDSQDINGEYLNLRVRFALIRRESGFISGLVAVLHDTTEQEKEERERRLFVSNVSHELRTPLTSVKSYLEALDEGALCETVAPDFIKVSLDETNRMMRMVTDLLHLSRIDNATSHLDVELINFTAFITFILNRFDKMKGQEKEKKYELVRDYPINSIWMEIDTDKMTQVVDNILNNAIKYSPDGGKITVRMKTTEDQMILSISDHGLGIPKQDLPRIFDRFYRVDRARSRAQGGTGLGLSIAKEIIKQHKGFIWAKSEYGKGSTFTIVLPYDKDAVKEEVWEDEVED</sequence>